<gene>
    <name type="primary">NSS</name>
</gene>
<proteinExistence type="evidence at protein level"/>
<comment type="function">
    <text evidence="2 3 6">Plays a role in the inhibition of host RLR-induced interferon-beta activation by inhibiting the phosphorylation of TANK-binding kinase 1/TBK1, thereby blocking IRF3 activation and preventing the establishment of an antiviral state (PubMed:28680969, PubMed:28848048). Also blocks IFN-triggered nuclear translocation and activation of host STAT2 (PubMed:28680969, PubMed:31040183).</text>
</comment>
<comment type="subunit">
    <text evidence="2 3 5 6 8">Interacts with host TBK1; this interaction antagonizes TBK1 phosphorylation and inhibits TBK1-IRF3 interaction (Probable) (PubMed:28680969, PubMed:28848048). Interacts with host STAT2; this interaction blocks the nuclear translocation and activation of host STAT2 (PubMed:31040183). Interacts with host TNIP2 (PubMed:30617349).</text>
</comment>
<comment type="subcellular location">
    <subcellularLocation>
        <location evidence="2 6">Host cytoplasm</location>
    </subcellularLocation>
</comment>
<comment type="similarity">
    <text evidence="7">Belongs to the Bandavirus NS-S protein family.</text>
</comment>
<reference key="1">
    <citation type="journal article" date="2012" name="N. Engl. J. Med.">
        <title>A newly discovered phlebovirus associated with severe febrile illness following tick bite in two patients in Missouri.</title>
        <authorList>
            <person name="McMullan L.K."/>
            <person name="Folk S.M."/>
            <person name="Kelly A.J."/>
            <person name="MacNeil A."/>
            <person name="Goldsmith C.S."/>
            <person name="Metcalfe M.G."/>
            <person name="Batten B.C."/>
            <person name="Albarino C.G."/>
            <person name="Zaki S.R."/>
            <person name="Rollin P.E."/>
            <person name="Nicholson W.L."/>
            <person name="Nichol S.T."/>
        </authorList>
    </citation>
    <scope>NUCLEOTIDE SEQUENCE [GENOMIC DNA]</scope>
    <source>
        <strain>Isolate Human/United States/1/2009</strain>
        <strain>Isolate Human/United States/2/2009</strain>
    </source>
</reference>
<reference key="2">
    <citation type="journal article" date="2017" name="J. Biol. Chem.">
        <title>Heartland virus NSs protein disrupts host defenses by blocking the TBK1 kinase-IRF3 transcription factor interaction and signaling required for interferon induction.</title>
        <authorList>
            <person name="Ning Y.J."/>
            <person name="Feng K."/>
            <person name="Min Y.Q."/>
            <person name="Deng F."/>
            <person name="Hu Z."/>
            <person name="Wang H."/>
        </authorList>
    </citation>
    <scope>FUNCTION</scope>
    <scope>INTERACTION WITH HOST TBK1</scope>
</reference>
<reference key="3">
    <citation type="journal article" date="2017" name="MSphere">
        <title>Differential Antagonism of Human Innate Immune Responses by Tick-Borne Phlebovirus Nonstructural Proteins.</title>
        <authorList>
            <person name="Rezelj V.V."/>
            <person name="Li P."/>
            <person name="Chaudhary V."/>
            <person name="Elliott R.M."/>
            <person name="Jin D.Y."/>
            <person name="Brennan B."/>
        </authorList>
    </citation>
    <scope>FUNCTION</scope>
    <scope>INTERACTION WITH HOST TBK1</scope>
    <scope>SUBCELLULAR LOCATION</scope>
</reference>
<reference key="4">
    <citation type="journal article" date="2018" name="J. Virol.">
        <title>Two Conserved Amino Acids within the NSs of Severe Fever with Thrombocytopenia Syndrome Phlebovirus Are Essential for Anti-interferon Activity.</title>
        <authorList>
            <person name="Moriyama M."/>
            <person name="Igarashi M."/>
            <person name="Koshiba T."/>
            <person name="Irie T."/>
            <person name="Takada A."/>
            <person name="Ichinohe T."/>
        </authorList>
    </citation>
    <scope>INTERACTION WITH HOST TBK1</scope>
    <scope>MUTAGENESIS OF 21-VAL--LEU-23; 24-VAL--LEU-26; 27-VAL--LEU-29 AND 66-PRO--PRO-69</scope>
</reference>
<reference key="5">
    <citation type="journal article" date="2019" name="J. Biol. Chem.">
        <title>Heartland virus antagonizes type I and III interferon antiviral signaling by inhibiting phosphorylation and nuclear translocation of STAT2 and STAT1.</title>
        <authorList>
            <person name="Feng K."/>
            <person name="Deng F."/>
            <person name="Hu Z."/>
            <person name="Wang H."/>
            <person name="Ning Y.J."/>
        </authorList>
    </citation>
    <scope>FUNCTION</scope>
    <scope>SUBCELLULAR LOCATION</scope>
    <scope>INTERACTION WITH HOST STAT2</scope>
    <source>
        <strain evidence="7">MO-4</strain>
    </source>
</reference>
<reference key="6">
    <citation type="journal article" date="2019" name="Nat. Microbiol.">
        <title>Severe fever with thrombocytopenia syndrome phlebovirus non-structural protein activates TPL2 signalling pathway for viral immunopathogenesis.</title>
        <authorList>
            <person name="Choi Y."/>
            <person name="Park S.J."/>
            <person name="Sun Y."/>
            <person name="Yoo J.S."/>
            <person name="Pudupakam R.S."/>
            <person name="Foo S.S."/>
            <person name="Shin W.J."/>
            <person name="Chen S.B."/>
            <person name="Tsichlis P.N."/>
            <person name="Lee W.J."/>
            <person name="Lee J.S."/>
            <person name="Li W."/>
            <person name="Brennan B."/>
            <person name="Choi Y.K."/>
            <person name="Jung J.U."/>
        </authorList>
    </citation>
    <scope>INTERACTION WITH HOST TNIP2</scope>
</reference>
<sequence length="299" mass="34006">MSLSKASQPSVKSACVRLPIVVLEPNLAELSTSYVGLVSCKCSVLTCSMMRKMKAFTNTVWLFGNPNNPLHALEPAVEQLLDEYSGDLGSYSQQEKSALRWPSGKPSVHFLQAAHLFFSLKNTWAVETGQENWRGFFHRITSGKKYKFEGDMVIDSCYKIDERRRRMGLPDTFITGLNPIMDVALLQIESLLRVRGLTLNYHLFTSSFLDKPLLDSLYFAIWRDKKKDDGSYSQDEGARQDDPLNPLDELLYLSDLPKPLAHYLNKCPLHNIIMHDEEVREAYLNPIWGKDWPALSSSP</sequence>
<dbReference type="EMBL" id="JX005842">
    <property type="protein sequence ID" value="AFP33390.1"/>
    <property type="molecule type" value="Genomic_RNA"/>
</dbReference>
<dbReference type="RefSeq" id="YP_009047243.1">
    <property type="nucleotide sequence ID" value="NC_024496.1"/>
</dbReference>
<dbReference type="GeneID" id="19893503"/>
<dbReference type="KEGG" id="vg:19893503"/>
<dbReference type="OrthoDB" id="23185at10239"/>
<dbReference type="Proteomes" id="UP000203778">
    <property type="component" value="Genome"/>
</dbReference>
<dbReference type="GO" id="GO:0030430">
    <property type="term" value="C:host cell cytoplasm"/>
    <property type="evidence" value="ECO:0007669"/>
    <property type="project" value="UniProtKB-SubCell"/>
</dbReference>
<dbReference type="GO" id="GO:0039548">
    <property type="term" value="P:symbiont-mediated suppression of host cytoplasmic pattern recognition receptor signaling pathway via inhibition of IRF3 activity"/>
    <property type="evidence" value="ECO:0007669"/>
    <property type="project" value="UniProtKB-KW"/>
</dbReference>
<dbReference type="GO" id="GO:0039723">
    <property type="term" value="P:symbiont-mediated suppression of host cytoplasmic pattern recognition receptor signaling pathway via inhibition of TBK1 activity"/>
    <property type="evidence" value="ECO:0007669"/>
    <property type="project" value="UniProtKB-KW"/>
</dbReference>
<dbReference type="GO" id="GO:0039564">
    <property type="term" value="P:symbiont-mediated suppression of host JAK-STAT cascade via inhibition of STAT2 activity"/>
    <property type="evidence" value="ECO:0007669"/>
    <property type="project" value="UniProtKB-KW"/>
</dbReference>
<dbReference type="GO" id="GO:0039722">
    <property type="term" value="P:symbiont-mediated suppression of host toll-like receptor signaling pathway"/>
    <property type="evidence" value="ECO:0007669"/>
    <property type="project" value="UniProtKB-KW"/>
</dbReference>
<dbReference type="GO" id="GO:0039502">
    <property type="term" value="P:symbiont-mediated suppression of host type I interferon-mediated signaling pathway"/>
    <property type="evidence" value="ECO:0007669"/>
    <property type="project" value="UniProtKB-KW"/>
</dbReference>
<feature type="chain" id="PRO_0000456168" description="Non-structural protein NS-S">
    <location>
        <begin position="1"/>
        <end position="299"/>
    </location>
</feature>
<feature type="region of interest" description="Involved in inclusion bodies formation" evidence="1">
    <location>
        <begin position="66"/>
        <end position="69"/>
    </location>
</feature>
<feature type="region of interest" description="Interaction with host TNIP2" evidence="1">
    <location>
        <begin position="148"/>
        <end position="220"/>
    </location>
</feature>
<feature type="site" description="Essential for suppression of TBK1/IRF3-mediated IFN response" evidence="4">
    <location>
        <position position="21"/>
    </location>
</feature>
<feature type="site" description="Essential for suppression of TBK1/IRF3-mediated IFN response" evidence="4">
    <location>
        <position position="23"/>
    </location>
</feature>
<feature type="mutagenesis site" description="50% loss of the inhibition of IFN-beta activation and loss of interaction with host TBK1." evidence="4">
    <original>VVL</original>
    <variation>AVA</variation>
    <location>
        <begin position="21"/>
        <end position="23"/>
    </location>
</feature>
<feature type="mutagenesis site" description="Almost complete loss of the inhibition of IFN-beta activation and interaction with host TBK1." evidence="4">
    <original>EPN</original>
    <variation>APA</variation>
    <location>
        <begin position="24"/>
        <end position="26"/>
    </location>
</feature>
<feature type="mutagenesis site" description="No effect on the inhibition of IFN-beta promoter activity." evidence="4">
    <original>LAE</original>
    <variation>AAA</variation>
    <location>
        <begin position="27"/>
        <end position="29"/>
    </location>
</feature>
<feature type="mutagenesis site" description="Almost complete loss of the inhibition of IFN-beta activation." evidence="4">
    <original>PNNP</original>
    <variation>ANNA</variation>
    <location>
        <begin position="66"/>
        <end position="69"/>
    </location>
</feature>
<keyword id="KW-1035">Host cytoplasm</keyword>
<keyword id="KW-0945">Host-virus interaction</keyword>
<keyword id="KW-1090">Inhibition of host innate immune response by virus</keyword>
<keyword id="KW-1114">Inhibition of host interferon signaling pathway by virus</keyword>
<keyword id="KW-1092">Inhibition of host IRF3 by virus</keyword>
<keyword id="KW-1113">Inhibition of host RLR pathway by virus</keyword>
<keyword id="KW-1106">Inhibition of host STAT2 by virus</keyword>
<keyword id="KW-1223">Inhibition of host TBK1 by virus</keyword>
<keyword id="KW-1225">Inhibition of host TLR pathway by virus</keyword>
<keyword id="KW-0922">Interferon antiviral system evasion</keyword>
<keyword id="KW-0899">Viral immunoevasion</keyword>
<accession>J3TRC5</accession>
<protein>
    <recommendedName>
        <fullName>Non-structural protein NS-S</fullName>
        <shortName>NSs</shortName>
    </recommendedName>
</protein>
<organismHost>
    <name type="scientific">Alces americanus</name>
    <name type="common">American moose</name>
    <dbReference type="NCBI Taxonomy" id="999462"/>
</organismHost>
<organismHost>
    <name type="scientific">Amblyomma americanum</name>
    <name type="common">Lone star tick</name>
    <dbReference type="NCBI Taxonomy" id="6943"/>
</organismHost>
<organismHost>
    <name type="scientific">Canis latrans</name>
    <name type="common">Coyote</name>
    <dbReference type="NCBI Taxonomy" id="9614"/>
</organismHost>
<organismHost>
    <name type="scientific">Didelphis virginiana</name>
    <name type="common">North American opossum</name>
    <name type="synonym">Didelphis marsupialis virginiana</name>
    <dbReference type="NCBI Taxonomy" id="9267"/>
</organismHost>
<organismHost>
    <name type="scientific">Equus caballus</name>
    <name type="common">Horse</name>
    <dbReference type="NCBI Taxonomy" id="9796"/>
</organismHost>
<organismHost>
    <name type="scientific">Homo sapiens</name>
    <name type="common">Human</name>
    <dbReference type="NCBI Taxonomy" id="9606"/>
</organismHost>
<organismHost>
    <name type="scientific">Odocoileus virginianus</name>
    <name type="common">White-tailed deer</name>
    <dbReference type="NCBI Taxonomy" id="9874"/>
</organismHost>
<organismHost>
    <name type="scientific">Procyon lotor</name>
    <name type="common">Raccoon</name>
    <dbReference type="NCBI Taxonomy" id="9654"/>
</organismHost>
<organism>
    <name type="scientific">Heartland virus</name>
    <name type="common">HTRV</name>
    <dbReference type="NCBI Taxonomy" id="1216928"/>
    <lineage>
        <taxon>Viruses</taxon>
        <taxon>Riboviria</taxon>
        <taxon>Orthornavirae</taxon>
        <taxon>Negarnaviricota</taxon>
        <taxon>Polyploviricotina</taxon>
        <taxon>Ellioviricetes</taxon>
        <taxon>Bunyavirales</taxon>
        <taxon>Phenuiviridae</taxon>
        <taxon>Bandavirus</taxon>
        <taxon>Bandavirus heartlandense</taxon>
    </lineage>
</organism>
<name>NSS_HTRV</name>
<evidence type="ECO:0000250" key="1">
    <source>
        <dbReference type="UniProtKB" id="A0A0B5AC19"/>
    </source>
</evidence>
<evidence type="ECO:0000269" key="2">
    <source>
    </source>
</evidence>
<evidence type="ECO:0000269" key="3">
    <source>
    </source>
</evidence>
<evidence type="ECO:0000269" key="4">
    <source>
    </source>
</evidence>
<evidence type="ECO:0000269" key="5">
    <source>
    </source>
</evidence>
<evidence type="ECO:0000269" key="6">
    <source>
    </source>
</evidence>
<evidence type="ECO:0000305" key="7"/>
<evidence type="ECO:0000305" key="8">
    <source>
    </source>
</evidence>